<sequence>MTNIRKTHPLLKIVNSSFVDLPAPSSLSSWWNFGSLLGVCLAVQILTGLFLAMHYTSDTATAFDSVTHICRDVNYGWVLRYLHANGASMFFICLYLHVGRGLYYGSYTYSETWNIGILLLFAVMATAFMGYVLPWGQMSFWGATVITNLLSAIPYIGTELVQWIWGGFSVDKATLTRFFAFHFLFPFIVAALVMVHLLFLHETGSNNPTGIPSDSDMIPFHPYYTIKDILGFLIMLTALSALVLFSPDLLGDPDNYMPANPLNTPPHIKPEWYFLFAYAILRSIPNKLGGVLALVLSILVLAIVPMLHTSKQRSMMFRPLSQCLFWFLVAILLTLTWIGGQPVEYPYVIIGQMASVLYFLTILVFMPLISIMENHLLKW</sequence>
<organism>
    <name type="scientific">Glossophaga morenoi</name>
    <name type="common">Mexican long-tongued bat</name>
    <dbReference type="NCBI Taxonomy" id="177162"/>
    <lineage>
        <taxon>Eukaryota</taxon>
        <taxon>Metazoa</taxon>
        <taxon>Chordata</taxon>
        <taxon>Craniata</taxon>
        <taxon>Vertebrata</taxon>
        <taxon>Euteleostomi</taxon>
        <taxon>Mammalia</taxon>
        <taxon>Eutheria</taxon>
        <taxon>Laurasiatheria</taxon>
        <taxon>Chiroptera</taxon>
        <taxon>Yangochiroptera</taxon>
        <taxon>Phyllostomidae</taxon>
        <taxon>Glossophaginae</taxon>
        <taxon>Glossophaga</taxon>
    </lineage>
</organism>
<accession>Q8W8Y1</accession>
<accession>Q8WGG3</accession>
<accession>Q8WGG4</accession>
<protein>
    <recommendedName>
        <fullName>Cytochrome b</fullName>
    </recommendedName>
    <alternativeName>
        <fullName>Complex III subunit 3</fullName>
    </alternativeName>
    <alternativeName>
        <fullName>Complex III subunit III</fullName>
    </alternativeName>
    <alternativeName>
        <fullName>Cytochrome b-c1 complex subunit 3</fullName>
    </alternativeName>
    <alternativeName>
        <fullName>Ubiquinol-cytochrome-c reductase complex cytochrome b subunit</fullName>
    </alternativeName>
</protein>
<dbReference type="EMBL" id="AF382879">
    <property type="protein sequence ID" value="AAL32353.1"/>
    <property type="molecule type" value="Genomic_DNA"/>
</dbReference>
<dbReference type="EMBL" id="AF382880">
    <property type="protein sequence ID" value="AAL32354.1"/>
    <property type="molecule type" value="Genomic_DNA"/>
</dbReference>
<dbReference type="EMBL" id="AF382881">
    <property type="protein sequence ID" value="AAL32355.1"/>
    <property type="molecule type" value="Genomic_DNA"/>
</dbReference>
<dbReference type="EMBL" id="AF382882">
    <property type="protein sequence ID" value="AAL32356.1"/>
    <property type="molecule type" value="Genomic_DNA"/>
</dbReference>
<dbReference type="SMR" id="Q8W8Y1"/>
<dbReference type="GO" id="GO:0005743">
    <property type="term" value="C:mitochondrial inner membrane"/>
    <property type="evidence" value="ECO:0007669"/>
    <property type="project" value="UniProtKB-SubCell"/>
</dbReference>
<dbReference type="GO" id="GO:0045275">
    <property type="term" value="C:respiratory chain complex III"/>
    <property type="evidence" value="ECO:0007669"/>
    <property type="project" value="InterPro"/>
</dbReference>
<dbReference type="GO" id="GO:0046872">
    <property type="term" value="F:metal ion binding"/>
    <property type="evidence" value="ECO:0007669"/>
    <property type="project" value="UniProtKB-KW"/>
</dbReference>
<dbReference type="GO" id="GO:0008121">
    <property type="term" value="F:ubiquinol-cytochrome-c reductase activity"/>
    <property type="evidence" value="ECO:0007669"/>
    <property type="project" value="InterPro"/>
</dbReference>
<dbReference type="GO" id="GO:0006122">
    <property type="term" value="P:mitochondrial electron transport, ubiquinol to cytochrome c"/>
    <property type="evidence" value="ECO:0007669"/>
    <property type="project" value="TreeGrafter"/>
</dbReference>
<dbReference type="CDD" id="cd00290">
    <property type="entry name" value="cytochrome_b_C"/>
    <property type="match status" value="1"/>
</dbReference>
<dbReference type="CDD" id="cd00284">
    <property type="entry name" value="Cytochrome_b_N"/>
    <property type="match status" value="1"/>
</dbReference>
<dbReference type="FunFam" id="1.20.810.10:FF:000002">
    <property type="entry name" value="Cytochrome b"/>
    <property type="match status" value="1"/>
</dbReference>
<dbReference type="Gene3D" id="1.20.810.10">
    <property type="entry name" value="Cytochrome Bc1 Complex, Chain C"/>
    <property type="match status" value="1"/>
</dbReference>
<dbReference type="InterPro" id="IPR005798">
    <property type="entry name" value="Cyt_b/b6_C"/>
</dbReference>
<dbReference type="InterPro" id="IPR036150">
    <property type="entry name" value="Cyt_b/b6_C_sf"/>
</dbReference>
<dbReference type="InterPro" id="IPR005797">
    <property type="entry name" value="Cyt_b/b6_N"/>
</dbReference>
<dbReference type="InterPro" id="IPR027387">
    <property type="entry name" value="Cytb/b6-like_sf"/>
</dbReference>
<dbReference type="InterPro" id="IPR030689">
    <property type="entry name" value="Cytochrome_b"/>
</dbReference>
<dbReference type="InterPro" id="IPR048260">
    <property type="entry name" value="Cytochrome_b_C_euk/bac"/>
</dbReference>
<dbReference type="InterPro" id="IPR048259">
    <property type="entry name" value="Cytochrome_b_N_euk/bac"/>
</dbReference>
<dbReference type="InterPro" id="IPR016174">
    <property type="entry name" value="Di-haem_cyt_TM"/>
</dbReference>
<dbReference type="PANTHER" id="PTHR19271">
    <property type="entry name" value="CYTOCHROME B"/>
    <property type="match status" value="1"/>
</dbReference>
<dbReference type="PANTHER" id="PTHR19271:SF16">
    <property type="entry name" value="CYTOCHROME B"/>
    <property type="match status" value="1"/>
</dbReference>
<dbReference type="Pfam" id="PF00032">
    <property type="entry name" value="Cytochrom_B_C"/>
    <property type="match status" value="1"/>
</dbReference>
<dbReference type="Pfam" id="PF00033">
    <property type="entry name" value="Cytochrome_B"/>
    <property type="match status" value="1"/>
</dbReference>
<dbReference type="PIRSF" id="PIRSF038885">
    <property type="entry name" value="COB"/>
    <property type="match status" value="1"/>
</dbReference>
<dbReference type="SUPFAM" id="SSF81648">
    <property type="entry name" value="a domain/subunit of cytochrome bc1 complex (Ubiquinol-cytochrome c reductase)"/>
    <property type="match status" value="1"/>
</dbReference>
<dbReference type="SUPFAM" id="SSF81342">
    <property type="entry name" value="Transmembrane di-heme cytochromes"/>
    <property type="match status" value="1"/>
</dbReference>
<dbReference type="PROSITE" id="PS51003">
    <property type="entry name" value="CYTB_CTER"/>
    <property type="match status" value="1"/>
</dbReference>
<dbReference type="PROSITE" id="PS51002">
    <property type="entry name" value="CYTB_NTER"/>
    <property type="match status" value="1"/>
</dbReference>
<name>CYB_GLOMN</name>
<comment type="function">
    <text evidence="2">Component of the ubiquinol-cytochrome c reductase complex (complex III or cytochrome b-c1 complex) that is part of the mitochondrial respiratory chain. The b-c1 complex mediates electron transfer from ubiquinol to cytochrome c. Contributes to the generation of a proton gradient across the mitochondrial membrane that is then used for ATP synthesis.</text>
</comment>
<comment type="cofactor">
    <cofactor evidence="2">
        <name>heme b</name>
        <dbReference type="ChEBI" id="CHEBI:60344"/>
    </cofactor>
    <text evidence="2">Binds 2 heme b groups non-covalently.</text>
</comment>
<comment type="subunit">
    <text evidence="2">The cytochrome bc1 complex contains 11 subunits: 3 respiratory subunits (MT-CYB, CYC1 and UQCRFS1), 2 core proteins (UQCRC1 and UQCRC2) and 6 low-molecular weight proteins (UQCRH/QCR6, UQCRB/QCR7, UQCRQ/QCR8, UQCR10/QCR9, UQCR11/QCR10 and a cleavage product of UQCRFS1). This cytochrome bc1 complex then forms a dimer.</text>
</comment>
<comment type="subcellular location">
    <subcellularLocation>
        <location evidence="2">Mitochondrion inner membrane</location>
        <topology evidence="2">Multi-pass membrane protein</topology>
    </subcellularLocation>
</comment>
<comment type="miscellaneous">
    <text evidence="1">Heme 1 (or BL or b562) is low-potential and absorbs at about 562 nm, and heme 2 (or BH or b566) is high-potential and absorbs at about 566 nm.</text>
</comment>
<comment type="similarity">
    <text evidence="3 4">Belongs to the cytochrome b family.</text>
</comment>
<comment type="caution">
    <text evidence="2">The full-length protein contains only eight transmembrane helices, not nine as predicted by bioinformatics tools.</text>
</comment>
<reference key="1">
    <citation type="journal article" date="2001" name="J. Mammal.">
        <title>Systematics of bats of the genus Glossophaga (Chiroptera: Phyllostomidae) and phylogeography in G. soricina based on the cytochrome b gene.</title>
        <authorList>
            <person name="Hoffmann F.G."/>
            <person name="Baker R.J."/>
        </authorList>
    </citation>
    <scope>NUCLEOTIDE SEQUENCE [GENOMIC DNA]</scope>
    <source>
        <strain>Isolate TK 20563</strain>
        <strain>Isolate TK 20564</strain>
        <strain>Isolate TK 20579</strain>
        <strain>Isolate TK 43176</strain>
    </source>
</reference>
<geneLocation type="mitochondrion"/>
<keyword id="KW-0249">Electron transport</keyword>
<keyword id="KW-0349">Heme</keyword>
<keyword id="KW-0408">Iron</keyword>
<keyword id="KW-0472">Membrane</keyword>
<keyword id="KW-0479">Metal-binding</keyword>
<keyword id="KW-0496">Mitochondrion</keyword>
<keyword id="KW-0999">Mitochondrion inner membrane</keyword>
<keyword id="KW-0679">Respiratory chain</keyword>
<keyword id="KW-0812">Transmembrane</keyword>
<keyword id="KW-1133">Transmembrane helix</keyword>
<keyword id="KW-0813">Transport</keyword>
<keyword id="KW-0830">Ubiquinone</keyword>
<feature type="chain" id="PRO_0000061007" description="Cytochrome b">
    <location>
        <begin position="1"/>
        <end position="379"/>
    </location>
</feature>
<feature type="transmembrane region" description="Helical" evidence="2">
    <location>
        <begin position="33"/>
        <end position="53"/>
    </location>
</feature>
<feature type="transmembrane region" description="Helical" evidence="2">
    <location>
        <begin position="77"/>
        <end position="98"/>
    </location>
</feature>
<feature type="transmembrane region" description="Helical" evidence="2">
    <location>
        <begin position="113"/>
        <end position="133"/>
    </location>
</feature>
<feature type="transmembrane region" description="Helical" evidence="2">
    <location>
        <begin position="178"/>
        <end position="198"/>
    </location>
</feature>
<feature type="transmembrane region" description="Helical" evidence="2">
    <location>
        <begin position="226"/>
        <end position="246"/>
    </location>
</feature>
<feature type="transmembrane region" description="Helical" evidence="2">
    <location>
        <begin position="288"/>
        <end position="308"/>
    </location>
</feature>
<feature type="transmembrane region" description="Helical" evidence="2">
    <location>
        <begin position="320"/>
        <end position="340"/>
    </location>
</feature>
<feature type="transmembrane region" description="Helical" evidence="2">
    <location>
        <begin position="347"/>
        <end position="367"/>
    </location>
</feature>
<feature type="binding site" description="axial binding residue" evidence="2">
    <location>
        <position position="83"/>
    </location>
    <ligand>
        <name>heme b</name>
        <dbReference type="ChEBI" id="CHEBI:60344"/>
        <label>b562</label>
    </ligand>
    <ligandPart>
        <name>Fe</name>
        <dbReference type="ChEBI" id="CHEBI:18248"/>
    </ligandPart>
</feature>
<feature type="binding site" description="axial binding residue" evidence="2">
    <location>
        <position position="97"/>
    </location>
    <ligand>
        <name>heme b</name>
        <dbReference type="ChEBI" id="CHEBI:60344"/>
        <label>b566</label>
    </ligand>
    <ligandPart>
        <name>Fe</name>
        <dbReference type="ChEBI" id="CHEBI:18248"/>
    </ligandPart>
</feature>
<feature type="binding site" description="axial binding residue" evidence="2">
    <location>
        <position position="182"/>
    </location>
    <ligand>
        <name>heme b</name>
        <dbReference type="ChEBI" id="CHEBI:60344"/>
        <label>b562</label>
    </ligand>
    <ligandPart>
        <name>Fe</name>
        <dbReference type="ChEBI" id="CHEBI:18248"/>
    </ligandPart>
</feature>
<feature type="binding site" description="axial binding residue" evidence="2">
    <location>
        <position position="196"/>
    </location>
    <ligand>
        <name>heme b</name>
        <dbReference type="ChEBI" id="CHEBI:60344"/>
        <label>b566</label>
    </ligand>
    <ligandPart>
        <name>Fe</name>
        <dbReference type="ChEBI" id="CHEBI:18248"/>
    </ligandPart>
</feature>
<feature type="binding site" evidence="2">
    <location>
        <position position="201"/>
    </location>
    <ligand>
        <name>a ubiquinone</name>
        <dbReference type="ChEBI" id="CHEBI:16389"/>
    </ligand>
</feature>
<feature type="sequence variant" description="In strain: Isolate TK 43176.">
    <original>D</original>
    <variation>N</variation>
    <location>
        <position position="64"/>
    </location>
</feature>
<feature type="sequence variant" description="In strain: Isolate TK 43176.">
    <original>A</original>
    <variation>T</variation>
    <location>
        <position position="190"/>
    </location>
</feature>
<feature type="sequence variant" description="In strain: Isolate TK 20579.">
    <original>P</original>
    <variation>Q</variation>
    <location>
        <position position="253"/>
    </location>
</feature>
<feature type="sequence variant" description="In strain: Isolate TK 20579 and Isolate TK 43176.">
    <original>M</original>
    <variation>T</variation>
    <location>
        <position position="353"/>
    </location>
</feature>
<feature type="sequence variant" description="In strain: Isolate TK 43176.">
    <original>I</original>
    <variation>T</variation>
    <location>
        <position position="369"/>
    </location>
</feature>
<proteinExistence type="inferred from homology"/>
<evidence type="ECO:0000250" key="1"/>
<evidence type="ECO:0000250" key="2">
    <source>
        <dbReference type="UniProtKB" id="P00157"/>
    </source>
</evidence>
<evidence type="ECO:0000255" key="3">
    <source>
        <dbReference type="PROSITE-ProRule" id="PRU00967"/>
    </source>
</evidence>
<evidence type="ECO:0000255" key="4">
    <source>
        <dbReference type="PROSITE-ProRule" id="PRU00968"/>
    </source>
</evidence>
<gene>
    <name type="primary">MT-CYB</name>
    <name type="synonym">COB</name>
    <name type="synonym">CYTB</name>
    <name type="synonym">MTCYB</name>
</gene>